<evidence type="ECO:0000305" key="1"/>
<reference key="1">
    <citation type="journal article" date="1991" name="Gene">
        <title>The TRP1 gene of Phytophthora parasitica encoding indole-3-glycerolphosphate synthase-N-(5'-phosphoribosyl)anthranilate isomerase: structure and evolutionary distance from homologous fungal genes.</title>
        <authorList>
            <person name="Karlovsky P."/>
            <person name="Prell H.H."/>
        </authorList>
    </citation>
    <scope>NUCLEOTIDE SEQUENCE [GENOMIC DNA]</scope>
</reference>
<organism>
    <name type="scientific">Phytophthora nicotianae</name>
    <name type="common">Potato buckeye rot agent</name>
    <name type="synonym">Phytophthora parasitica</name>
    <dbReference type="NCBI Taxonomy" id="4792"/>
    <lineage>
        <taxon>Eukaryota</taxon>
        <taxon>Sar</taxon>
        <taxon>Stramenopiles</taxon>
        <taxon>Oomycota</taxon>
        <taxon>Peronosporales</taxon>
        <taxon>Peronosporaceae</taxon>
        <taxon>Phytophthora</taxon>
    </lineage>
</organism>
<accession>P24920</accession>
<comment type="function">
    <text>Bifunctional enzyme that catalyzes two sequential steps of tryptophan biosynthetic pathway.</text>
</comment>
<comment type="catalytic activity">
    <reaction>
        <text>N-(5-phospho-beta-D-ribosyl)anthranilate = 1-(2-carboxyphenylamino)-1-deoxy-D-ribulose 5-phosphate</text>
        <dbReference type="Rhea" id="RHEA:21540"/>
        <dbReference type="ChEBI" id="CHEBI:18277"/>
        <dbReference type="ChEBI" id="CHEBI:58613"/>
        <dbReference type="EC" id="5.3.1.24"/>
    </reaction>
</comment>
<comment type="catalytic activity">
    <reaction>
        <text>1-(2-carboxyphenylamino)-1-deoxy-D-ribulose 5-phosphate + H(+) = (1S,2R)-1-C-(indol-3-yl)glycerol 3-phosphate + CO2 + H2O</text>
        <dbReference type="Rhea" id="RHEA:23476"/>
        <dbReference type="ChEBI" id="CHEBI:15377"/>
        <dbReference type="ChEBI" id="CHEBI:15378"/>
        <dbReference type="ChEBI" id="CHEBI:16526"/>
        <dbReference type="ChEBI" id="CHEBI:58613"/>
        <dbReference type="ChEBI" id="CHEBI:58866"/>
        <dbReference type="EC" id="4.1.1.48"/>
    </reaction>
</comment>
<comment type="pathway">
    <text>Amino-acid biosynthesis; L-tryptophan biosynthesis; L-tryptophan from chorismate: step 3/5.</text>
</comment>
<comment type="pathway">
    <text>Amino-acid biosynthesis; L-tryptophan biosynthesis; L-tryptophan from chorismate: step 4/5.</text>
</comment>
<comment type="similarity">
    <text evidence="1">In the N-terminal section; belongs to the TrpC family.</text>
</comment>
<comment type="similarity">
    <text evidence="1">In the C-terminal section; belongs to the TrpF family.</text>
</comment>
<dbReference type="EC" id="4.1.1.48"/>
<dbReference type="EC" id="5.3.1.24"/>
<dbReference type="EMBL" id="M64473">
    <property type="protein sequence ID" value="AAA33751.1"/>
    <property type="molecule type" value="Genomic_DNA"/>
</dbReference>
<dbReference type="SMR" id="P24920"/>
<dbReference type="VEuPathDB" id="FungiDB:PPTG_16326"/>
<dbReference type="BRENDA" id="5.3.1.24">
    <property type="organism ID" value="4813"/>
</dbReference>
<dbReference type="UniPathway" id="UPA00035">
    <property type="reaction ID" value="UER00042"/>
</dbReference>
<dbReference type="UniPathway" id="UPA00035">
    <property type="reaction ID" value="UER00043"/>
</dbReference>
<dbReference type="GO" id="GO:0004425">
    <property type="term" value="F:indole-3-glycerol-phosphate synthase activity"/>
    <property type="evidence" value="ECO:0007669"/>
    <property type="project" value="UniProtKB-EC"/>
</dbReference>
<dbReference type="GO" id="GO:0004640">
    <property type="term" value="F:phosphoribosylanthranilate isomerase activity"/>
    <property type="evidence" value="ECO:0007669"/>
    <property type="project" value="UniProtKB-EC"/>
</dbReference>
<dbReference type="GO" id="GO:0000162">
    <property type="term" value="P:L-tryptophan biosynthetic process"/>
    <property type="evidence" value="ECO:0007669"/>
    <property type="project" value="UniProtKB-UniPathway"/>
</dbReference>
<dbReference type="CDD" id="cd00331">
    <property type="entry name" value="IGPS"/>
    <property type="match status" value="1"/>
</dbReference>
<dbReference type="CDD" id="cd00405">
    <property type="entry name" value="PRAI"/>
    <property type="match status" value="1"/>
</dbReference>
<dbReference type="Gene3D" id="3.20.20.70">
    <property type="entry name" value="Aldolase class I"/>
    <property type="match status" value="2"/>
</dbReference>
<dbReference type="HAMAP" id="MF_00135">
    <property type="entry name" value="PRAI"/>
    <property type="match status" value="1"/>
</dbReference>
<dbReference type="InterPro" id="IPR013785">
    <property type="entry name" value="Aldolase_TIM"/>
</dbReference>
<dbReference type="InterPro" id="IPR045186">
    <property type="entry name" value="Indole-3-glycerol_P_synth"/>
</dbReference>
<dbReference type="InterPro" id="IPR013798">
    <property type="entry name" value="Indole-3-glycerol_P_synth_dom"/>
</dbReference>
<dbReference type="InterPro" id="IPR001240">
    <property type="entry name" value="PRAI_dom"/>
</dbReference>
<dbReference type="InterPro" id="IPR011060">
    <property type="entry name" value="RibuloseP-bd_barrel"/>
</dbReference>
<dbReference type="PANTHER" id="PTHR22854:SF2">
    <property type="entry name" value="INDOLE-3-GLYCEROL-PHOSPHATE SYNTHASE"/>
    <property type="match status" value="1"/>
</dbReference>
<dbReference type="PANTHER" id="PTHR22854">
    <property type="entry name" value="TRYPTOPHAN BIOSYNTHESIS PROTEIN"/>
    <property type="match status" value="1"/>
</dbReference>
<dbReference type="Pfam" id="PF00218">
    <property type="entry name" value="IGPS"/>
    <property type="match status" value="1"/>
</dbReference>
<dbReference type="Pfam" id="PF00697">
    <property type="entry name" value="PRAI"/>
    <property type="match status" value="1"/>
</dbReference>
<dbReference type="SUPFAM" id="SSF51366">
    <property type="entry name" value="Ribulose-phoshate binding barrel"/>
    <property type="match status" value="2"/>
</dbReference>
<name>TRPC_PHYNI</name>
<keyword id="KW-0028">Amino-acid biosynthesis</keyword>
<keyword id="KW-0057">Aromatic amino acid biosynthesis</keyword>
<keyword id="KW-0210">Decarboxylase</keyword>
<keyword id="KW-0413">Isomerase</keyword>
<keyword id="KW-0456">Lyase</keyword>
<keyword id="KW-0511">Multifunctional enzyme</keyword>
<keyword id="KW-0822">Tryptophan biosynthesis</keyword>
<sequence>MGNILEEIAAQRRLDVAAAKQVVSTDDLAKKIEHTESVYGPALPVLERLNAPAEQVQAYANAGASMISVLTEPKWFKGSLDDMMEAREVVEGMSQRPAILRKDFIIDVYQLLEARAYGADCVLLIVTLLSKEQLIELIDATHNLGMCALVEVNSVQELDIALAAKARLIGVNNRDLRTFKVDMNTTARVADAIRERGLSLGRDGVALFALSGIRSHTDVVKYEKCGARGILVGEYLMKSGDIATTVKDLLQNVTRHSESGEFALLPPLAKVCGITTVEYALAALRNGANMIGIIMAEHSPRYVEKEEAKAIAKAVREYGERTGPILSDILESHLDDKSDWFHRNVLALREACSRAPLVVGVFVNKTATEMNAAAEEIGLDLVQLHGDEGFEICKDIKYPTIRALHLPDTAQCDGVDAEAVLQQVSEGLANYILLDTTVKGQQGGTGVAFDWKIAAIFTQARLPCLMAGGLTPENVVKALSVGHPVGVDVSSGVEVKGSPGVKDLDKVAAFLKAVKDHLSVATLKIDEETEN</sequence>
<proteinExistence type="inferred from homology"/>
<gene>
    <name type="primary">TRP1</name>
</gene>
<feature type="chain" id="PRO_0000154306" description="Tryptophan biosynthesis protein TRP1">
    <location>
        <begin position="1"/>
        <end position="531"/>
    </location>
</feature>
<feature type="region of interest" description="Indole-3-glycerol phosphate synthase">
    <location>
        <begin position="1"/>
        <end position="254"/>
    </location>
</feature>
<feature type="region of interest" description="N-(5'-phosphoribosyl)anthranilate isomerase">
    <location>
        <begin position="255"/>
        <end position="531"/>
    </location>
</feature>
<protein>
    <recommendedName>
        <fullName>Tryptophan biosynthesis protein TRP1</fullName>
    </recommendedName>
    <domain>
        <recommendedName>
            <fullName>Indole-3-glycerol phosphate synthase</fullName>
            <shortName>IGPS</shortName>
            <ecNumber>4.1.1.48</ecNumber>
        </recommendedName>
    </domain>
    <domain>
        <recommendedName>
            <fullName>N-(5'-phospho-ribosyl)anthranilate isomerase</fullName>
            <shortName>PRAI</shortName>
            <ecNumber>5.3.1.24</ecNumber>
        </recommendedName>
    </domain>
</protein>